<organism>
    <name type="scientific">Saccharum robustum</name>
    <name type="common">Wild New-Guinean cane</name>
    <dbReference type="NCBI Taxonomy" id="62334"/>
    <lineage>
        <taxon>Eukaryota</taxon>
        <taxon>Viridiplantae</taxon>
        <taxon>Streptophyta</taxon>
        <taxon>Embryophyta</taxon>
        <taxon>Tracheophyta</taxon>
        <taxon>Spermatophyta</taxon>
        <taxon>Magnoliopsida</taxon>
        <taxon>Liliopsida</taxon>
        <taxon>Poales</taxon>
        <taxon>Poaceae</taxon>
        <taxon>PACMAD clade</taxon>
        <taxon>Panicoideae</taxon>
        <taxon>Andropogonodae</taxon>
        <taxon>Andropogoneae</taxon>
        <taxon>Saccharinae</taxon>
        <taxon>Saccharum</taxon>
        <taxon>Saccharum officinarum species complex</taxon>
    </lineage>
</organism>
<feature type="chain" id="PRO_0000220478" description="Cytochrome b6-f complex subunit 6">
    <location>
        <begin position="1"/>
        <end position="31"/>
    </location>
</feature>
<feature type="transmembrane region" description="Helical" evidence="1">
    <location>
        <begin position="4"/>
        <end position="24"/>
    </location>
</feature>
<geneLocation type="chloroplast"/>
<reference key="1">
    <citation type="journal article" date="2005" name="Theor. Appl. Genet.">
        <title>Very close relationship of the chloroplast genomes among Saccharum species.</title>
        <authorList>
            <person name="Takahashi S."/>
            <person name="Furukawa T."/>
            <person name="Asano T."/>
            <person name="Terajima Y."/>
            <person name="Shimada H."/>
            <person name="Sugimoto A."/>
            <person name="Kadowaki K."/>
        </authorList>
    </citation>
    <scope>NUCLEOTIDE SEQUENCE [GENOMIC DNA]</scope>
    <source>
        <strain>16</strain>
        <strain>6</strain>
    </source>
</reference>
<name>PETL_SACRO</name>
<proteinExistence type="inferred from homology"/>
<protein>
    <recommendedName>
        <fullName evidence="1">Cytochrome b6-f complex subunit 6</fullName>
    </recommendedName>
    <alternativeName>
        <fullName evidence="1">Cytochrome b6-f complex subunit PetL</fullName>
    </alternativeName>
    <alternativeName>
        <fullName evidence="1">Cytochrome b6-f complex subunit VI</fullName>
    </alternativeName>
</protein>
<accession>Q4QYT4</accession>
<comment type="function">
    <text evidence="1">Component of the cytochrome b6-f complex, which mediates electron transfer between photosystem II (PSII) and photosystem I (PSI), cyclic electron flow around PSI, and state transitions. PetL is important for photoautotrophic growth as well as for electron transfer efficiency and stability of the cytochrome b6-f complex.</text>
</comment>
<comment type="subunit">
    <text evidence="1">The 4 large subunits of the cytochrome b6-f complex are cytochrome b6, subunit IV (17 kDa polypeptide, PetD), cytochrome f and the Rieske protein, while the 4 small subunits are PetG, PetL, PetM and PetN. The complex functions as a dimer.</text>
</comment>
<comment type="subcellular location">
    <subcellularLocation>
        <location evidence="1">Plastid</location>
        <location evidence="1">Chloroplast thylakoid membrane</location>
        <topology evidence="1">Single-pass membrane protein</topology>
    </subcellularLocation>
</comment>
<comment type="similarity">
    <text evidence="1">Belongs to the PetL family.</text>
</comment>
<gene>
    <name evidence="1" type="primary">petL</name>
</gene>
<evidence type="ECO:0000255" key="1">
    <source>
        <dbReference type="HAMAP-Rule" id="MF_00433"/>
    </source>
</evidence>
<keyword id="KW-0150">Chloroplast</keyword>
<keyword id="KW-0249">Electron transport</keyword>
<keyword id="KW-0472">Membrane</keyword>
<keyword id="KW-0602">Photosynthesis</keyword>
<keyword id="KW-0934">Plastid</keyword>
<keyword id="KW-0793">Thylakoid</keyword>
<keyword id="KW-0812">Transmembrane</keyword>
<keyword id="KW-1133">Transmembrane helix</keyword>
<keyword id="KW-0813">Transport</keyword>
<sequence length="31" mass="3426">MLTITSYFGFLLAALTITPALFIGLNKIRLI</sequence>
<dbReference type="EMBL" id="AP007052">
    <property type="protein sequence ID" value="BAE02598.1"/>
    <property type="molecule type" value="Genomic_DNA"/>
</dbReference>
<dbReference type="EMBL" id="AP007053">
    <property type="protein sequence ID" value="BAE02599.1"/>
    <property type="molecule type" value="Genomic_DNA"/>
</dbReference>
<dbReference type="SMR" id="Q4QYT4"/>
<dbReference type="GO" id="GO:0009535">
    <property type="term" value="C:chloroplast thylakoid membrane"/>
    <property type="evidence" value="ECO:0007669"/>
    <property type="project" value="UniProtKB-SubCell"/>
</dbReference>
<dbReference type="GO" id="GO:0009512">
    <property type="term" value="C:cytochrome b6f complex"/>
    <property type="evidence" value="ECO:0007669"/>
    <property type="project" value="InterPro"/>
</dbReference>
<dbReference type="GO" id="GO:0045158">
    <property type="term" value="F:electron transporter, transferring electrons within cytochrome b6/f complex of photosystem II activity"/>
    <property type="evidence" value="ECO:0007669"/>
    <property type="project" value="UniProtKB-UniRule"/>
</dbReference>
<dbReference type="GO" id="GO:0015979">
    <property type="term" value="P:photosynthesis"/>
    <property type="evidence" value="ECO:0007669"/>
    <property type="project" value="UniProtKB-KW"/>
</dbReference>
<dbReference type="HAMAP" id="MF_00433">
    <property type="entry name" value="Cytb6_f_PetL"/>
    <property type="match status" value="1"/>
</dbReference>
<dbReference type="InterPro" id="IPR007802">
    <property type="entry name" value="Cyt_b6/f_cplx_su6"/>
</dbReference>
<dbReference type="PANTHER" id="PTHR37266">
    <property type="entry name" value="CYTOCHROME B6-F COMPLEX SUBUNIT 6"/>
    <property type="match status" value="1"/>
</dbReference>
<dbReference type="PANTHER" id="PTHR37266:SF1">
    <property type="entry name" value="CYTOCHROME B6-F COMPLEX SUBUNIT 6"/>
    <property type="match status" value="1"/>
</dbReference>
<dbReference type="Pfam" id="PF05115">
    <property type="entry name" value="PetL"/>
    <property type="match status" value="1"/>
</dbReference>
<dbReference type="SUPFAM" id="SSF103436">
    <property type="entry name" value="PetL subunit of the cytochrome b6f complex"/>
    <property type="match status" value="1"/>
</dbReference>